<gene>
    <name type="primary">Hpcal4</name>
</gene>
<evidence type="ECO:0000250" key="1"/>
<evidence type="ECO:0000255" key="2">
    <source>
        <dbReference type="PROSITE-ProRule" id="PRU00448"/>
    </source>
</evidence>
<evidence type="ECO:0000305" key="3"/>
<proteinExistence type="evidence at protein level"/>
<dbReference type="EMBL" id="AB079893">
    <property type="protein sequence ID" value="BAC16230.1"/>
    <property type="molecule type" value="mRNA"/>
</dbReference>
<dbReference type="EMBL" id="AK032591">
    <property type="protein sequence ID" value="BAC27938.1"/>
    <property type="molecule type" value="mRNA"/>
</dbReference>
<dbReference type="CCDS" id="CCDS18611.1"/>
<dbReference type="RefSeq" id="NP_001416787.1">
    <property type="nucleotide sequence ID" value="NM_001429858.1"/>
</dbReference>
<dbReference type="RefSeq" id="NP_001416788.1">
    <property type="nucleotide sequence ID" value="NM_001429859.1"/>
</dbReference>
<dbReference type="RefSeq" id="NP_778163.1">
    <property type="nucleotide sequence ID" value="NM_174998.5"/>
</dbReference>
<dbReference type="SMR" id="Q8BGZ1"/>
<dbReference type="BioGRID" id="228357">
    <property type="interactions" value="4"/>
</dbReference>
<dbReference type="FunCoup" id="Q8BGZ1">
    <property type="interactions" value="280"/>
</dbReference>
<dbReference type="STRING" id="10090.ENSMUSP00000051487"/>
<dbReference type="GlyGen" id="Q8BGZ1">
    <property type="glycosylation" value="2 sites, 1 N-linked glycan (1 site), 1 O-linked glycan (1 site)"/>
</dbReference>
<dbReference type="iPTMnet" id="Q8BGZ1"/>
<dbReference type="PhosphoSitePlus" id="Q8BGZ1"/>
<dbReference type="SwissPalm" id="Q8BGZ1"/>
<dbReference type="PaxDb" id="10090-ENSMUSP00000051487"/>
<dbReference type="ProteomicsDB" id="273269"/>
<dbReference type="Antibodypedia" id="31935">
    <property type="antibodies" value="159 antibodies from 21 providers"/>
</dbReference>
<dbReference type="DNASU" id="170638"/>
<dbReference type="Ensembl" id="ENSMUST00000059667.9">
    <property type="protein sequence ID" value="ENSMUSP00000051487.3"/>
    <property type="gene ID" value="ENSMUSG00000046093.10"/>
</dbReference>
<dbReference type="Ensembl" id="ENSMUST00000106246.8">
    <property type="protein sequence ID" value="ENSMUSP00000101853.2"/>
    <property type="gene ID" value="ENSMUSG00000046093.10"/>
</dbReference>
<dbReference type="GeneID" id="170638"/>
<dbReference type="KEGG" id="mmu:170638"/>
<dbReference type="UCSC" id="uc008uox.1">
    <property type="organism name" value="mouse"/>
</dbReference>
<dbReference type="AGR" id="MGI:2157521"/>
<dbReference type="CTD" id="51440"/>
<dbReference type="MGI" id="MGI:2157521">
    <property type="gene designation" value="Hpcal4"/>
</dbReference>
<dbReference type="VEuPathDB" id="HostDB:ENSMUSG00000046093"/>
<dbReference type="eggNOG" id="KOG0044">
    <property type="taxonomic scope" value="Eukaryota"/>
</dbReference>
<dbReference type="GeneTree" id="ENSGT00940000161166"/>
<dbReference type="HOGENOM" id="CLU_072366_1_0_1"/>
<dbReference type="InParanoid" id="Q8BGZ1"/>
<dbReference type="OMA" id="RAWEHQP"/>
<dbReference type="OrthoDB" id="191686at2759"/>
<dbReference type="PhylomeDB" id="Q8BGZ1"/>
<dbReference type="TreeFam" id="TF300009"/>
<dbReference type="BioGRID-ORCS" id="170638">
    <property type="hits" value="4 hits in 76 CRISPR screens"/>
</dbReference>
<dbReference type="PRO" id="PR:Q8BGZ1"/>
<dbReference type="Proteomes" id="UP000000589">
    <property type="component" value="Chromosome 4"/>
</dbReference>
<dbReference type="RNAct" id="Q8BGZ1">
    <property type="molecule type" value="protein"/>
</dbReference>
<dbReference type="Bgee" id="ENSMUSG00000046093">
    <property type="expression patterns" value="Expressed in subiculum and 109 other cell types or tissues"/>
</dbReference>
<dbReference type="ExpressionAtlas" id="Q8BGZ1">
    <property type="expression patterns" value="baseline and differential"/>
</dbReference>
<dbReference type="GO" id="GO:0005246">
    <property type="term" value="F:calcium channel regulator activity"/>
    <property type="evidence" value="ECO:0007669"/>
    <property type="project" value="Ensembl"/>
</dbReference>
<dbReference type="GO" id="GO:0005509">
    <property type="term" value="F:calcium ion binding"/>
    <property type="evidence" value="ECO:0007669"/>
    <property type="project" value="InterPro"/>
</dbReference>
<dbReference type="GO" id="GO:0019904">
    <property type="term" value="F:protein domain specific binding"/>
    <property type="evidence" value="ECO:0007669"/>
    <property type="project" value="Ensembl"/>
</dbReference>
<dbReference type="GO" id="GO:0009408">
    <property type="term" value="P:response to heat"/>
    <property type="evidence" value="ECO:0000315"/>
    <property type="project" value="MGI"/>
</dbReference>
<dbReference type="CDD" id="cd00051">
    <property type="entry name" value="EFh"/>
    <property type="match status" value="2"/>
</dbReference>
<dbReference type="FunFam" id="1.10.238.10:FF:000009">
    <property type="entry name" value="Visinin-like protein 1"/>
    <property type="match status" value="1"/>
</dbReference>
<dbReference type="Gene3D" id="1.10.238.10">
    <property type="entry name" value="EF-hand"/>
    <property type="match status" value="1"/>
</dbReference>
<dbReference type="InterPro" id="IPR011992">
    <property type="entry name" value="EF-hand-dom_pair"/>
</dbReference>
<dbReference type="InterPro" id="IPR018247">
    <property type="entry name" value="EF_Hand_1_Ca_BS"/>
</dbReference>
<dbReference type="InterPro" id="IPR002048">
    <property type="entry name" value="EF_hand_dom"/>
</dbReference>
<dbReference type="InterPro" id="IPR028846">
    <property type="entry name" value="Recoverin"/>
</dbReference>
<dbReference type="PANTHER" id="PTHR23055">
    <property type="entry name" value="CALCIUM BINDING PROTEINS"/>
    <property type="match status" value="1"/>
</dbReference>
<dbReference type="PANTHER" id="PTHR23055:SF84">
    <property type="entry name" value="HIPPOCALCIN-LIKE PROTEIN 4"/>
    <property type="match status" value="1"/>
</dbReference>
<dbReference type="Pfam" id="PF00036">
    <property type="entry name" value="EF-hand_1"/>
    <property type="match status" value="1"/>
</dbReference>
<dbReference type="Pfam" id="PF13499">
    <property type="entry name" value="EF-hand_7"/>
    <property type="match status" value="1"/>
</dbReference>
<dbReference type="PRINTS" id="PR00450">
    <property type="entry name" value="RECOVERIN"/>
</dbReference>
<dbReference type="SMART" id="SM00054">
    <property type="entry name" value="EFh"/>
    <property type="match status" value="3"/>
</dbReference>
<dbReference type="SUPFAM" id="SSF47473">
    <property type="entry name" value="EF-hand"/>
    <property type="match status" value="1"/>
</dbReference>
<dbReference type="PROSITE" id="PS00018">
    <property type="entry name" value="EF_HAND_1"/>
    <property type="match status" value="3"/>
</dbReference>
<dbReference type="PROSITE" id="PS50222">
    <property type="entry name" value="EF_HAND_2"/>
    <property type="match status" value="3"/>
</dbReference>
<organism>
    <name type="scientific">Mus musculus</name>
    <name type="common">Mouse</name>
    <dbReference type="NCBI Taxonomy" id="10090"/>
    <lineage>
        <taxon>Eukaryota</taxon>
        <taxon>Metazoa</taxon>
        <taxon>Chordata</taxon>
        <taxon>Craniata</taxon>
        <taxon>Vertebrata</taxon>
        <taxon>Euteleostomi</taxon>
        <taxon>Mammalia</taxon>
        <taxon>Eutheria</taxon>
        <taxon>Euarchontoglires</taxon>
        <taxon>Glires</taxon>
        <taxon>Rodentia</taxon>
        <taxon>Myomorpha</taxon>
        <taxon>Muroidea</taxon>
        <taxon>Muridae</taxon>
        <taxon>Murinae</taxon>
        <taxon>Mus</taxon>
        <taxon>Mus</taxon>
    </lineage>
</organism>
<accession>Q8BGZ1</accession>
<feature type="initiator methionine" description="Removed">
    <location>
        <position position="1"/>
    </location>
</feature>
<feature type="chain" id="PRO_0000073778" description="Hippocalcin-like protein 4">
    <location>
        <begin position="2"/>
        <end position="191"/>
    </location>
</feature>
<feature type="domain" description="EF-hand 1" evidence="3">
    <location>
        <begin position="24"/>
        <end position="59"/>
    </location>
</feature>
<feature type="domain" description="EF-hand 2" evidence="2">
    <location>
        <begin position="60"/>
        <end position="95"/>
    </location>
</feature>
<feature type="domain" description="EF-hand 3" evidence="2">
    <location>
        <begin position="96"/>
        <end position="131"/>
    </location>
</feature>
<feature type="domain" description="EF-hand 4" evidence="2">
    <location>
        <begin position="146"/>
        <end position="181"/>
    </location>
</feature>
<feature type="binding site" evidence="2">
    <location>
        <position position="73"/>
    </location>
    <ligand>
        <name>Ca(2+)</name>
        <dbReference type="ChEBI" id="CHEBI:29108"/>
        <label>1</label>
    </ligand>
</feature>
<feature type="binding site" evidence="2">
    <location>
        <position position="75"/>
    </location>
    <ligand>
        <name>Ca(2+)</name>
        <dbReference type="ChEBI" id="CHEBI:29108"/>
        <label>1</label>
    </ligand>
</feature>
<feature type="binding site" evidence="2">
    <location>
        <position position="77"/>
    </location>
    <ligand>
        <name>Ca(2+)</name>
        <dbReference type="ChEBI" id="CHEBI:29108"/>
        <label>1</label>
    </ligand>
</feature>
<feature type="binding site" evidence="2">
    <location>
        <position position="79"/>
    </location>
    <ligand>
        <name>Ca(2+)</name>
        <dbReference type="ChEBI" id="CHEBI:29108"/>
        <label>1</label>
    </ligand>
</feature>
<feature type="binding site" evidence="2">
    <location>
        <position position="84"/>
    </location>
    <ligand>
        <name>Ca(2+)</name>
        <dbReference type="ChEBI" id="CHEBI:29108"/>
        <label>1</label>
    </ligand>
</feature>
<feature type="binding site" evidence="2">
    <location>
        <position position="109"/>
    </location>
    <ligand>
        <name>Ca(2+)</name>
        <dbReference type="ChEBI" id="CHEBI:29108"/>
        <label>2</label>
    </ligand>
</feature>
<feature type="binding site" evidence="2">
    <location>
        <position position="111"/>
    </location>
    <ligand>
        <name>Ca(2+)</name>
        <dbReference type="ChEBI" id="CHEBI:29108"/>
        <label>2</label>
    </ligand>
</feature>
<feature type="binding site" evidence="2">
    <location>
        <position position="113"/>
    </location>
    <ligand>
        <name>Ca(2+)</name>
        <dbReference type="ChEBI" id="CHEBI:29108"/>
        <label>2</label>
    </ligand>
</feature>
<feature type="binding site" evidence="2">
    <location>
        <position position="115"/>
    </location>
    <ligand>
        <name>Ca(2+)</name>
        <dbReference type="ChEBI" id="CHEBI:29108"/>
        <label>2</label>
    </ligand>
</feature>
<feature type="binding site" evidence="2">
    <location>
        <position position="120"/>
    </location>
    <ligand>
        <name>Ca(2+)</name>
        <dbReference type="ChEBI" id="CHEBI:29108"/>
        <label>2</label>
    </ligand>
</feature>
<feature type="binding site" evidence="2">
    <location>
        <position position="159"/>
    </location>
    <ligand>
        <name>Ca(2+)</name>
        <dbReference type="ChEBI" id="CHEBI:29108"/>
        <label>3</label>
    </ligand>
</feature>
<feature type="binding site" evidence="2">
    <location>
        <position position="161"/>
    </location>
    <ligand>
        <name>Ca(2+)</name>
        <dbReference type="ChEBI" id="CHEBI:29108"/>
        <label>3</label>
    </ligand>
</feature>
<feature type="binding site" evidence="2">
    <location>
        <position position="163"/>
    </location>
    <ligand>
        <name>Ca(2+)</name>
        <dbReference type="ChEBI" id="CHEBI:29108"/>
        <label>3</label>
    </ligand>
</feature>
<feature type="binding site" evidence="2">
    <location>
        <position position="165"/>
    </location>
    <ligand>
        <name>Ca(2+)</name>
        <dbReference type="ChEBI" id="CHEBI:29108"/>
        <label>3</label>
    </ligand>
</feature>
<feature type="binding site" evidence="2">
    <location>
        <position position="170"/>
    </location>
    <ligand>
        <name>Ca(2+)</name>
        <dbReference type="ChEBI" id="CHEBI:29108"/>
        <label>3</label>
    </ligand>
</feature>
<feature type="lipid moiety-binding region" description="N-myristoyl glycine" evidence="1">
    <location>
        <position position="2"/>
    </location>
</feature>
<comment type="function">
    <text evidence="1">May be involved in the calcium-dependent regulation of rhodopsin phosphorylation.</text>
</comment>
<comment type="miscellaneous">
    <text evidence="1">Probably binds two or three calcium ions.</text>
</comment>
<comment type="similarity">
    <text evidence="3">Belongs to the recoverin family.</text>
</comment>
<name>HPCL4_MOUSE</name>
<keyword id="KW-0106">Calcium</keyword>
<keyword id="KW-0449">Lipoprotein</keyword>
<keyword id="KW-0479">Metal-binding</keyword>
<keyword id="KW-0519">Myristate</keyword>
<keyword id="KW-1185">Reference proteome</keyword>
<keyword id="KW-0677">Repeat</keyword>
<sequence length="191" mass="22215">MGKNNSKLAPEVLEDLVQNTEFSEQELKQWYKGFLKDCPSGILNLEEFQQLYIKFFPYGDASKFAQHAFRTFDKNGDGTIDFREFICALSVTSRGSFEQKLNWAFEMYDLDGDGRITRLEMLEIIEAIYKMVGTVIMMRMNQDGLTPQQRVDKIFKKMDQDKDDQITLEEFKEAAKSDPSIVLLLQCDMQK</sequence>
<reference key="1">
    <citation type="submission" date="2002-02" db="EMBL/GenBank/DDBJ databases">
        <title>Molecular identification of NCBPs and CaBPs in murine gastrointestinal smooth muscles.</title>
        <authorList>
            <person name="Ohya S."/>
            <person name="Horowitz B."/>
        </authorList>
    </citation>
    <scope>NUCLEOTIDE SEQUENCE [MRNA]</scope>
    <source>
        <strain>BALB/cJ</strain>
        <tissue>Brain</tissue>
    </source>
</reference>
<reference key="2">
    <citation type="journal article" date="2005" name="Science">
        <title>The transcriptional landscape of the mammalian genome.</title>
        <authorList>
            <person name="Carninci P."/>
            <person name="Kasukawa T."/>
            <person name="Katayama S."/>
            <person name="Gough J."/>
            <person name="Frith M.C."/>
            <person name="Maeda N."/>
            <person name="Oyama R."/>
            <person name="Ravasi T."/>
            <person name="Lenhard B."/>
            <person name="Wells C."/>
            <person name="Kodzius R."/>
            <person name="Shimokawa K."/>
            <person name="Bajic V.B."/>
            <person name="Brenner S.E."/>
            <person name="Batalov S."/>
            <person name="Forrest A.R."/>
            <person name="Zavolan M."/>
            <person name="Davis M.J."/>
            <person name="Wilming L.G."/>
            <person name="Aidinis V."/>
            <person name="Allen J.E."/>
            <person name="Ambesi-Impiombato A."/>
            <person name="Apweiler R."/>
            <person name="Aturaliya R.N."/>
            <person name="Bailey T.L."/>
            <person name="Bansal M."/>
            <person name="Baxter L."/>
            <person name="Beisel K.W."/>
            <person name="Bersano T."/>
            <person name="Bono H."/>
            <person name="Chalk A.M."/>
            <person name="Chiu K.P."/>
            <person name="Choudhary V."/>
            <person name="Christoffels A."/>
            <person name="Clutterbuck D.R."/>
            <person name="Crowe M.L."/>
            <person name="Dalla E."/>
            <person name="Dalrymple B.P."/>
            <person name="de Bono B."/>
            <person name="Della Gatta G."/>
            <person name="di Bernardo D."/>
            <person name="Down T."/>
            <person name="Engstrom P."/>
            <person name="Fagiolini M."/>
            <person name="Faulkner G."/>
            <person name="Fletcher C.F."/>
            <person name="Fukushima T."/>
            <person name="Furuno M."/>
            <person name="Futaki S."/>
            <person name="Gariboldi M."/>
            <person name="Georgii-Hemming P."/>
            <person name="Gingeras T.R."/>
            <person name="Gojobori T."/>
            <person name="Green R.E."/>
            <person name="Gustincich S."/>
            <person name="Harbers M."/>
            <person name="Hayashi Y."/>
            <person name="Hensch T.K."/>
            <person name="Hirokawa N."/>
            <person name="Hill D."/>
            <person name="Huminiecki L."/>
            <person name="Iacono M."/>
            <person name="Ikeo K."/>
            <person name="Iwama A."/>
            <person name="Ishikawa T."/>
            <person name="Jakt M."/>
            <person name="Kanapin A."/>
            <person name="Katoh M."/>
            <person name="Kawasawa Y."/>
            <person name="Kelso J."/>
            <person name="Kitamura H."/>
            <person name="Kitano H."/>
            <person name="Kollias G."/>
            <person name="Krishnan S.P."/>
            <person name="Kruger A."/>
            <person name="Kummerfeld S.K."/>
            <person name="Kurochkin I.V."/>
            <person name="Lareau L.F."/>
            <person name="Lazarevic D."/>
            <person name="Lipovich L."/>
            <person name="Liu J."/>
            <person name="Liuni S."/>
            <person name="McWilliam S."/>
            <person name="Madan Babu M."/>
            <person name="Madera M."/>
            <person name="Marchionni L."/>
            <person name="Matsuda H."/>
            <person name="Matsuzawa S."/>
            <person name="Miki H."/>
            <person name="Mignone F."/>
            <person name="Miyake S."/>
            <person name="Morris K."/>
            <person name="Mottagui-Tabar S."/>
            <person name="Mulder N."/>
            <person name="Nakano N."/>
            <person name="Nakauchi H."/>
            <person name="Ng P."/>
            <person name="Nilsson R."/>
            <person name="Nishiguchi S."/>
            <person name="Nishikawa S."/>
            <person name="Nori F."/>
            <person name="Ohara O."/>
            <person name="Okazaki Y."/>
            <person name="Orlando V."/>
            <person name="Pang K.C."/>
            <person name="Pavan W.J."/>
            <person name="Pavesi G."/>
            <person name="Pesole G."/>
            <person name="Petrovsky N."/>
            <person name="Piazza S."/>
            <person name="Reed J."/>
            <person name="Reid J.F."/>
            <person name="Ring B.Z."/>
            <person name="Ringwald M."/>
            <person name="Rost B."/>
            <person name="Ruan Y."/>
            <person name="Salzberg S.L."/>
            <person name="Sandelin A."/>
            <person name="Schneider C."/>
            <person name="Schoenbach C."/>
            <person name="Sekiguchi K."/>
            <person name="Semple C.A."/>
            <person name="Seno S."/>
            <person name="Sessa L."/>
            <person name="Sheng Y."/>
            <person name="Shibata Y."/>
            <person name="Shimada H."/>
            <person name="Shimada K."/>
            <person name="Silva D."/>
            <person name="Sinclair B."/>
            <person name="Sperling S."/>
            <person name="Stupka E."/>
            <person name="Sugiura K."/>
            <person name="Sultana R."/>
            <person name="Takenaka Y."/>
            <person name="Taki K."/>
            <person name="Tammoja K."/>
            <person name="Tan S.L."/>
            <person name="Tang S."/>
            <person name="Taylor M.S."/>
            <person name="Tegner J."/>
            <person name="Teichmann S.A."/>
            <person name="Ueda H.R."/>
            <person name="van Nimwegen E."/>
            <person name="Verardo R."/>
            <person name="Wei C.L."/>
            <person name="Yagi K."/>
            <person name="Yamanishi H."/>
            <person name="Zabarovsky E."/>
            <person name="Zhu S."/>
            <person name="Zimmer A."/>
            <person name="Hide W."/>
            <person name="Bult C."/>
            <person name="Grimmond S.M."/>
            <person name="Teasdale R.D."/>
            <person name="Liu E.T."/>
            <person name="Brusic V."/>
            <person name="Quackenbush J."/>
            <person name="Wahlestedt C."/>
            <person name="Mattick J.S."/>
            <person name="Hume D.A."/>
            <person name="Kai C."/>
            <person name="Sasaki D."/>
            <person name="Tomaru Y."/>
            <person name="Fukuda S."/>
            <person name="Kanamori-Katayama M."/>
            <person name="Suzuki M."/>
            <person name="Aoki J."/>
            <person name="Arakawa T."/>
            <person name="Iida J."/>
            <person name="Imamura K."/>
            <person name="Itoh M."/>
            <person name="Kato T."/>
            <person name="Kawaji H."/>
            <person name="Kawagashira N."/>
            <person name="Kawashima T."/>
            <person name="Kojima M."/>
            <person name="Kondo S."/>
            <person name="Konno H."/>
            <person name="Nakano K."/>
            <person name="Ninomiya N."/>
            <person name="Nishio T."/>
            <person name="Okada M."/>
            <person name="Plessy C."/>
            <person name="Shibata K."/>
            <person name="Shiraki T."/>
            <person name="Suzuki S."/>
            <person name="Tagami M."/>
            <person name="Waki K."/>
            <person name="Watahiki A."/>
            <person name="Okamura-Oho Y."/>
            <person name="Suzuki H."/>
            <person name="Kawai J."/>
            <person name="Hayashizaki Y."/>
        </authorList>
    </citation>
    <scope>NUCLEOTIDE SEQUENCE [LARGE SCALE MRNA]</scope>
    <source>
        <strain>C57BL/6J</strain>
        <tissue>Olfactory bulb</tissue>
    </source>
</reference>
<reference key="3">
    <citation type="journal article" date="2010" name="Cell">
        <title>A tissue-specific atlas of mouse protein phosphorylation and expression.</title>
        <authorList>
            <person name="Huttlin E.L."/>
            <person name="Jedrychowski M.P."/>
            <person name="Elias J.E."/>
            <person name="Goswami T."/>
            <person name="Rad R."/>
            <person name="Beausoleil S.A."/>
            <person name="Villen J."/>
            <person name="Haas W."/>
            <person name="Sowa M.E."/>
            <person name="Gygi S.P."/>
        </authorList>
    </citation>
    <scope>IDENTIFICATION BY MASS SPECTROMETRY [LARGE SCALE ANALYSIS]</scope>
    <source>
        <tissue>Brain</tissue>
        <tissue>Brown adipose tissue</tissue>
        <tissue>Kidney</tissue>
        <tissue>Liver</tissue>
        <tissue>Testis</tissue>
    </source>
</reference>
<protein>
    <recommendedName>
        <fullName>Hippocalcin-like protein 4</fullName>
    </recommendedName>
    <alternativeName>
        <fullName>Neural visinin-like protein 2</fullName>
        <shortName>NVP-2</shortName>
    </alternativeName>
</protein>